<accession>P79336</accession>
<protein>
    <recommendedName>
        <fullName>T-cell surface glycoprotein CD8 beta chain</fullName>
    </recommendedName>
    <cdAntigenName>CD8b</cdAntigenName>
</protein>
<gene>
    <name type="primary">CD8B</name>
    <name type="synonym">CD8B1</name>
</gene>
<name>CD8B_FELCA</name>
<reference key="1">
    <citation type="journal article" date="1996" name="Immunology">
        <title>Molecular cloning of the feline CD8 beta-chain.</title>
        <authorList>
            <person name="Pecoraro M.R."/>
            <person name="Shimojima M."/>
            <person name="Maeda K."/>
            <person name="Inoshima Y."/>
            <person name="Kawaguchi Y."/>
            <person name="Kai C."/>
            <person name="Mikami T."/>
        </authorList>
    </citation>
    <scope>NUCLEOTIDE SEQUENCE [MRNA]</scope>
    <source>
        <tissue>Thymus</tissue>
    </source>
</reference>
<organism>
    <name type="scientific">Felis catus</name>
    <name type="common">Cat</name>
    <name type="synonym">Felis silvestris catus</name>
    <dbReference type="NCBI Taxonomy" id="9685"/>
    <lineage>
        <taxon>Eukaryota</taxon>
        <taxon>Metazoa</taxon>
        <taxon>Chordata</taxon>
        <taxon>Craniata</taxon>
        <taxon>Vertebrata</taxon>
        <taxon>Euteleostomi</taxon>
        <taxon>Mammalia</taxon>
        <taxon>Eutheria</taxon>
        <taxon>Laurasiatheria</taxon>
        <taxon>Carnivora</taxon>
        <taxon>Feliformia</taxon>
        <taxon>Felidae</taxon>
        <taxon>Felinae</taxon>
        <taxon>Felis</taxon>
    </lineage>
</organism>
<keyword id="KW-1064">Adaptive immunity</keyword>
<keyword id="KW-1003">Cell membrane</keyword>
<keyword id="KW-1015">Disulfide bond</keyword>
<keyword id="KW-0325">Glycoprotein</keyword>
<keyword id="KW-0391">Immunity</keyword>
<keyword id="KW-0393">Immunoglobulin domain</keyword>
<keyword id="KW-0449">Lipoprotein</keyword>
<keyword id="KW-0472">Membrane</keyword>
<keyword id="KW-0564">Palmitate</keyword>
<keyword id="KW-1185">Reference proteome</keyword>
<keyword id="KW-0732">Signal</keyword>
<keyword id="KW-0812">Transmembrane</keyword>
<keyword id="KW-1133">Transmembrane helix</keyword>
<feature type="signal peptide" evidence="1">
    <location>
        <begin position="1"/>
        <end position="21"/>
    </location>
</feature>
<feature type="chain" id="PRO_0000014642" description="T-cell surface glycoprotein CD8 beta chain">
    <location>
        <begin position="22"/>
        <end position="210"/>
    </location>
</feature>
<feature type="topological domain" description="Extracellular" evidence="4">
    <location>
        <begin position="22"/>
        <end position="170"/>
    </location>
</feature>
<feature type="transmembrane region" description="Helical" evidence="4">
    <location>
        <begin position="171"/>
        <end position="191"/>
    </location>
</feature>
<feature type="topological domain" description="Cytoplasmic" evidence="4">
    <location>
        <begin position="192"/>
        <end position="210"/>
    </location>
</feature>
<feature type="domain" description="Ig-like V-type">
    <location>
        <begin position="22"/>
        <end position="132"/>
    </location>
</feature>
<feature type="region of interest" description="Disordered" evidence="6">
    <location>
        <begin position="139"/>
        <end position="161"/>
    </location>
</feature>
<feature type="glycosylation site" description="N-linked (GlcNAc...) asparagine" evidence="4">
    <location>
        <position position="102"/>
    </location>
</feature>
<feature type="disulfide bond" evidence="5">
    <location>
        <begin position="41"/>
        <end position="116"/>
    </location>
</feature>
<dbReference type="EMBL" id="AB000484">
    <property type="protein sequence ID" value="BAA19125.1"/>
    <property type="molecule type" value="mRNA"/>
</dbReference>
<dbReference type="RefSeq" id="NP_001009867.1">
    <property type="nucleotide sequence ID" value="NM_001009867.1"/>
</dbReference>
<dbReference type="SMR" id="P79336"/>
<dbReference type="STRING" id="9685.ENSFCAP00000025660"/>
<dbReference type="GlyCosmos" id="P79336">
    <property type="glycosylation" value="1 site, No reported glycans"/>
</dbReference>
<dbReference type="PaxDb" id="9685-ENSFCAP00000025660"/>
<dbReference type="GeneID" id="493948"/>
<dbReference type="KEGG" id="fca:493948"/>
<dbReference type="CTD" id="926"/>
<dbReference type="eggNOG" id="ENOG502SANQ">
    <property type="taxonomic scope" value="Eukaryota"/>
</dbReference>
<dbReference type="InParanoid" id="P79336"/>
<dbReference type="OrthoDB" id="9394844at2759"/>
<dbReference type="Proteomes" id="UP000011712">
    <property type="component" value="Unplaced"/>
</dbReference>
<dbReference type="GO" id="GO:0009986">
    <property type="term" value="C:cell surface"/>
    <property type="evidence" value="ECO:0000318"/>
    <property type="project" value="GO_Central"/>
</dbReference>
<dbReference type="GO" id="GO:0005886">
    <property type="term" value="C:plasma membrane"/>
    <property type="evidence" value="ECO:0007669"/>
    <property type="project" value="UniProtKB-SubCell"/>
</dbReference>
<dbReference type="GO" id="GO:0015026">
    <property type="term" value="F:coreceptor activity"/>
    <property type="evidence" value="ECO:0007669"/>
    <property type="project" value="InterPro"/>
</dbReference>
<dbReference type="GO" id="GO:0042288">
    <property type="term" value="F:MHC class I protein binding"/>
    <property type="evidence" value="ECO:0007669"/>
    <property type="project" value="InterPro"/>
</dbReference>
<dbReference type="GO" id="GO:0002250">
    <property type="term" value="P:adaptive immune response"/>
    <property type="evidence" value="ECO:0007669"/>
    <property type="project" value="UniProtKB-KW"/>
</dbReference>
<dbReference type="GO" id="GO:0050776">
    <property type="term" value="P:regulation of immune response"/>
    <property type="evidence" value="ECO:0007669"/>
    <property type="project" value="InterPro"/>
</dbReference>
<dbReference type="CDD" id="cd07700">
    <property type="entry name" value="IgV_CD8_beta"/>
    <property type="match status" value="1"/>
</dbReference>
<dbReference type="FunFam" id="2.60.40.10:FF:000645">
    <property type="entry name" value="T-cell surface glycoprotein CD8 beta chain"/>
    <property type="match status" value="1"/>
</dbReference>
<dbReference type="Gene3D" id="2.60.40.10">
    <property type="entry name" value="Immunoglobulins"/>
    <property type="match status" value="1"/>
</dbReference>
<dbReference type="InterPro" id="IPR042414">
    <property type="entry name" value="CD8B"/>
</dbReference>
<dbReference type="InterPro" id="IPR007110">
    <property type="entry name" value="Ig-like_dom"/>
</dbReference>
<dbReference type="InterPro" id="IPR036179">
    <property type="entry name" value="Ig-like_dom_sf"/>
</dbReference>
<dbReference type="InterPro" id="IPR013783">
    <property type="entry name" value="Ig-like_fold"/>
</dbReference>
<dbReference type="InterPro" id="IPR003599">
    <property type="entry name" value="Ig_sub"/>
</dbReference>
<dbReference type="InterPro" id="IPR013106">
    <property type="entry name" value="Ig_V-set"/>
</dbReference>
<dbReference type="PANTHER" id="PTHR11292">
    <property type="entry name" value="T-CELL SURFACE GLYCOPROTEIN CD8 BETA CHAIN"/>
    <property type="match status" value="1"/>
</dbReference>
<dbReference type="PANTHER" id="PTHR11292:SF7">
    <property type="entry name" value="T-CELL SURFACE GLYCOPROTEIN CD8 BETA CHAIN-RELATED"/>
    <property type="match status" value="1"/>
</dbReference>
<dbReference type="Pfam" id="PF07686">
    <property type="entry name" value="V-set"/>
    <property type="match status" value="1"/>
</dbReference>
<dbReference type="SMART" id="SM00409">
    <property type="entry name" value="IG"/>
    <property type="match status" value="1"/>
</dbReference>
<dbReference type="SUPFAM" id="SSF48726">
    <property type="entry name" value="Immunoglobulin"/>
    <property type="match status" value="1"/>
</dbReference>
<dbReference type="PROSITE" id="PS50835">
    <property type="entry name" value="IG_LIKE"/>
    <property type="match status" value="1"/>
</dbReference>
<evidence type="ECO:0000250" key="1"/>
<evidence type="ECO:0000250" key="2">
    <source>
        <dbReference type="UniProtKB" id="P10300"/>
    </source>
</evidence>
<evidence type="ECO:0000250" key="3">
    <source>
        <dbReference type="UniProtKB" id="P10966"/>
    </source>
</evidence>
<evidence type="ECO:0000255" key="4"/>
<evidence type="ECO:0000255" key="5">
    <source>
        <dbReference type="PROSITE-ProRule" id="PRU00114"/>
    </source>
</evidence>
<evidence type="ECO:0000256" key="6">
    <source>
        <dbReference type="SAM" id="MobiDB-lite"/>
    </source>
</evidence>
<sequence>MQPGLWLLLATQLAALRGSSVLQQAPGSVMVQTNGMVIMSCEAKTSPTSTRIYWLRHRQAPSPDSHYECLAYWDPIKGIVYGQEVEPEKLTVFPDATRSILNLTSVKPADSGIYFCMTVGSPELTFGKGTRLSVVDVLPTNSQPTKKPTPRKKMCRPPSPVTQKGPSCGLLTLGLLVAGVLVLLVSLGVAIHLYRLKRRARLRLLKQFYK</sequence>
<proteinExistence type="evidence at transcript level"/>
<comment type="function">
    <text evidence="2 3">Integral membrane glycoprotein that plays an essential role in the immune response and serves multiple functions in responses against both external and internal offenses. In T-cells, functions primarily as a coreceptor for MHC class I molecule:peptide complex. The antigens presented by class I peptides are derived from cytosolic proteins while class II derived from extracellular proteins. Interacts simultaneously with the T-cell receptor (TCR) and the MHC class I proteins presented by antigen presenting cells (APCs). In turn, recruits the Src kinase LCK to the vicinity of the TCR-CD3 complex. A palmitoylation site in the cytoplasmic tail of CD8B chain contributes to partitioning of CD8 into the plasma membrane lipid rafts where signaling proteins are enriched. Once LCK recruited, it initiates different intracellular signaling pathways by phosphorylating various substrates ultimately leading to lymphokine production, motility, adhesion and activation of cytotoxic T-lymphocytes (CTLs). Additionally, plays a critical role in thymic selection of CD8+ T-cells.</text>
</comment>
<comment type="subunit">
    <text evidence="2 3">Forms disulfide-linked heterodimers with CD8A at the cell surface. Interacts with CD3D; this interaction couples TCR-CD3 with CD8. Interacts with LCK.</text>
</comment>
<comment type="subcellular location">
    <subcellularLocation>
        <location evidence="3">Cell membrane</location>
        <topology evidence="3">Single-pass type I membrane protein</topology>
    </subcellularLocation>
    <text evidence="3">Requires the partner CD8A for efficient cell surface expression. The heterodimer CD8A/CD8B localizes to lipid rafts due to CD8B cytoplasmic tail palmitoylation.</text>
</comment>
<comment type="PTM">
    <text evidence="3">Phosphorylated as a consequence of T-cell activation.</text>
</comment>
<comment type="PTM">
    <text evidence="3">Palmitoylated at the cytoplasmic tail and thereby targets the heterodimer CD8A/CD8B to lipid rafts unlike CD8A homodimers.</text>
</comment>